<name>DAPB_ALKOO</name>
<evidence type="ECO:0000255" key="1">
    <source>
        <dbReference type="HAMAP-Rule" id="MF_00102"/>
    </source>
</evidence>
<evidence type="ECO:0000305" key="2"/>
<proteinExistence type="inferred from homology"/>
<dbReference type="EC" id="1.17.1.8" evidence="1"/>
<dbReference type="EMBL" id="CP000853">
    <property type="protein sequence ID" value="ABW18710.1"/>
    <property type="molecule type" value="Genomic_DNA"/>
</dbReference>
<dbReference type="RefSeq" id="WP_012159022.1">
    <property type="nucleotide sequence ID" value="NC_009922.1"/>
</dbReference>
<dbReference type="SMR" id="A8MF41"/>
<dbReference type="STRING" id="350688.Clos_1164"/>
<dbReference type="KEGG" id="aoe:Clos_1164"/>
<dbReference type="eggNOG" id="COG0289">
    <property type="taxonomic scope" value="Bacteria"/>
</dbReference>
<dbReference type="HOGENOM" id="CLU_047479_2_2_9"/>
<dbReference type="OrthoDB" id="9790352at2"/>
<dbReference type="UniPathway" id="UPA00034">
    <property type="reaction ID" value="UER00018"/>
</dbReference>
<dbReference type="Proteomes" id="UP000000269">
    <property type="component" value="Chromosome"/>
</dbReference>
<dbReference type="GO" id="GO:0005829">
    <property type="term" value="C:cytosol"/>
    <property type="evidence" value="ECO:0007669"/>
    <property type="project" value="TreeGrafter"/>
</dbReference>
<dbReference type="GO" id="GO:0008839">
    <property type="term" value="F:4-hydroxy-tetrahydrodipicolinate reductase"/>
    <property type="evidence" value="ECO:0007669"/>
    <property type="project" value="UniProtKB-EC"/>
</dbReference>
<dbReference type="GO" id="GO:0051287">
    <property type="term" value="F:NAD binding"/>
    <property type="evidence" value="ECO:0007669"/>
    <property type="project" value="UniProtKB-UniRule"/>
</dbReference>
<dbReference type="GO" id="GO:0050661">
    <property type="term" value="F:NADP binding"/>
    <property type="evidence" value="ECO:0007669"/>
    <property type="project" value="UniProtKB-UniRule"/>
</dbReference>
<dbReference type="GO" id="GO:0016726">
    <property type="term" value="F:oxidoreductase activity, acting on CH or CH2 groups, NAD or NADP as acceptor"/>
    <property type="evidence" value="ECO:0007669"/>
    <property type="project" value="UniProtKB-UniRule"/>
</dbReference>
<dbReference type="GO" id="GO:0019877">
    <property type="term" value="P:diaminopimelate biosynthetic process"/>
    <property type="evidence" value="ECO:0007669"/>
    <property type="project" value="UniProtKB-UniRule"/>
</dbReference>
<dbReference type="GO" id="GO:0009089">
    <property type="term" value="P:lysine biosynthetic process via diaminopimelate"/>
    <property type="evidence" value="ECO:0007669"/>
    <property type="project" value="UniProtKB-UniRule"/>
</dbReference>
<dbReference type="CDD" id="cd02274">
    <property type="entry name" value="DHDPR_N"/>
    <property type="match status" value="1"/>
</dbReference>
<dbReference type="Gene3D" id="3.30.360.10">
    <property type="entry name" value="Dihydrodipicolinate Reductase, domain 2"/>
    <property type="match status" value="1"/>
</dbReference>
<dbReference type="Gene3D" id="3.40.50.720">
    <property type="entry name" value="NAD(P)-binding Rossmann-like Domain"/>
    <property type="match status" value="1"/>
</dbReference>
<dbReference type="HAMAP" id="MF_00102">
    <property type="entry name" value="DapB"/>
    <property type="match status" value="1"/>
</dbReference>
<dbReference type="InterPro" id="IPR022663">
    <property type="entry name" value="DapB_C"/>
</dbReference>
<dbReference type="InterPro" id="IPR000846">
    <property type="entry name" value="DapB_N"/>
</dbReference>
<dbReference type="InterPro" id="IPR022664">
    <property type="entry name" value="DapB_N_CS"/>
</dbReference>
<dbReference type="InterPro" id="IPR023940">
    <property type="entry name" value="DHDPR_bac"/>
</dbReference>
<dbReference type="InterPro" id="IPR036291">
    <property type="entry name" value="NAD(P)-bd_dom_sf"/>
</dbReference>
<dbReference type="NCBIfam" id="TIGR00036">
    <property type="entry name" value="dapB"/>
    <property type="match status" value="1"/>
</dbReference>
<dbReference type="PANTHER" id="PTHR20836:SF0">
    <property type="entry name" value="4-HYDROXY-TETRAHYDRODIPICOLINATE REDUCTASE 1, CHLOROPLASTIC-RELATED"/>
    <property type="match status" value="1"/>
</dbReference>
<dbReference type="PANTHER" id="PTHR20836">
    <property type="entry name" value="DIHYDRODIPICOLINATE REDUCTASE"/>
    <property type="match status" value="1"/>
</dbReference>
<dbReference type="Pfam" id="PF05173">
    <property type="entry name" value="DapB_C"/>
    <property type="match status" value="1"/>
</dbReference>
<dbReference type="Pfam" id="PF01113">
    <property type="entry name" value="DapB_N"/>
    <property type="match status" value="1"/>
</dbReference>
<dbReference type="PIRSF" id="PIRSF000161">
    <property type="entry name" value="DHPR"/>
    <property type="match status" value="1"/>
</dbReference>
<dbReference type="SUPFAM" id="SSF55347">
    <property type="entry name" value="Glyceraldehyde-3-phosphate dehydrogenase-like, C-terminal domain"/>
    <property type="match status" value="1"/>
</dbReference>
<dbReference type="SUPFAM" id="SSF51735">
    <property type="entry name" value="NAD(P)-binding Rossmann-fold domains"/>
    <property type="match status" value="1"/>
</dbReference>
<dbReference type="PROSITE" id="PS01298">
    <property type="entry name" value="DAPB"/>
    <property type="match status" value="1"/>
</dbReference>
<comment type="function">
    <text evidence="1">Catalyzes the conversion of 4-hydroxy-tetrahydrodipicolinate (HTPA) to tetrahydrodipicolinate.</text>
</comment>
<comment type="catalytic activity">
    <reaction evidence="1">
        <text>(S)-2,3,4,5-tetrahydrodipicolinate + NAD(+) + H2O = (2S,4S)-4-hydroxy-2,3,4,5-tetrahydrodipicolinate + NADH + H(+)</text>
        <dbReference type="Rhea" id="RHEA:35323"/>
        <dbReference type="ChEBI" id="CHEBI:15377"/>
        <dbReference type="ChEBI" id="CHEBI:15378"/>
        <dbReference type="ChEBI" id="CHEBI:16845"/>
        <dbReference type="ChEBI" id="CHEBI:57540"/>
        <dbReference type="ChEBI" id="CHEBI:57945"/>
        <dbReference type="ChEBI" id="CHEBI:67139"/>
        <dbReference type="EC" id="1.17.1.8"/>
    </reaction>
</comment>
<comment type="catalytic activity">
    <reaction evidence="1">
        <text>(S)-2,3,4,5-tetrahydrodipicolinate + NADP(+) + H2O = (2S,4S)-4-hydroxy-2,3,4,5-tetrahydrodipicolinate + NADPH + H(+)</text>
        <dbReference type="Rhea" id="RHEA:35331"/>
        <dbReference type="ChEBI" id="CHEBI:15377"/>
        <dbReference type="ChEBI" id="CHEBI:15378"/>
        <dbReference type="ChEBI" id="CHEBI:16845"/>
        <dbReference type="ChEBI" id="CHEBI:57783"/>
        <dbReference type="ChEBI" id="CHEBI:58349"/>
        <dbReference type="ChEBI" id="CHEBI:67139"/>
        <dbReference type="EC" id="1.17.1.8"/>
    </reaction>
</comment>
<comment type="pathway">
    <text evidence="1">Amino-acid biosynthesis; L-lysine biosynthesis via DAP pathway; (S)-tetrahydrodipicolinate from L-aspartate: step 4/4.</text>
</comment>
<comment type="subcellular location">
    <subcellularLocation>
        <location evidence="1">Cytoplasm</location>
    </subcellularLocation>
</comment>
<comment type="similarity">
    <text evidence="1">Belongs to the DapB family.</text>
</comment>
<comment type="caution">
    <text evidence="2">Was originally thought to be a dihydrodipicolinate reductase (DHDPR), catalyzing the conversion of dihydrodipicolinate to tetrahydrodipicolinate. However, it was shown in E.coli that the substrate of the enzymatic reaction is not dihydrodipicolinate (DHDP) but in fact (2S,4S)-4-hydroxy-2,3,4,5-tetrahydrodipicolinic acid (HTPA), the product released by the DapA-catalyzed reaction.</text>
</comment>
<protein>
    <recommendedName>
        <fullName evidence="1">4-hydroxy-tetrahydrodipicolinate reductase</fullName>
        <shortName evidence="1">HTPA reductase</shortName>
        <ecNumber evidence="1">1.17.1.8</ecNumber>
    </recommendedName>
</protein>
<organism>
    <name type="scientific">Alkaliphilus oremlandii (strain OhILAs)</name>
    <name type="common">Clostridium oremlandii (strain OhILAs)</name>
    <dbReference type="NCBI Taxonomy" id="350688"/>
    <lineage>
        <taxon>Bacteria</taxon>
        <taxon>Bacillati</taxon>
        <taxon>Bacillota</taxon>
        <taxon>Clostridia</taxon>
        <taxon>Peptostreptococcales</taxon>
        <taxon>Natronincolaceae</taxon>
        <taxon>Alkaliphilus</taxon>
    </lineage>
</organism>
<gene>
    <name evidence="1" type="primary">dapB</name>
    <name type="ordered locus">Clos_1164</name>
</gene>
<feature type="chain" id="PRO_1000057676" description="4-hydroxy-tetrahydrodipicolinate reductase">
    <location>
        <begin position="1"/>
        <end position="241"/>
    </location>
</feature>
<feature type="active site" description="Proton donor/acceptor" evidence="1">
    <location>
        <position position="131"/>
    </location>
</feature>
<feature type="active site" description="Proton donor" evidence="1">
    <location>
        <position position="135"/>
    </location>
</feature>
<feature type="binding site" evidence="1">
    <location>
        <begin position="7"/>
        <end position="12"/>
    </location>
    <ligand>
        <name>NAD(+)</name>
        <dbReference type="ChEBI" id="CHEBI:57540"/>
    </ligand>
</feature>
<feature type="binding site" evidence="1">
    <location>
        <begin position="74"/>
        <end position="76"/>
    </location>
    <ligand>
        <name>NAD(+)</name>
        <dbReference type="ChEBI" id="CHEBI:57540"/>
    </ligand>
</feature>
<feature type="binding site" evidence="1">
    <location>
        <begin position="98"/>
        <end position="101"/>
    </location>
    <ligand>
        <name>NAD(+)</name>
        <dbReference type="ChEBI" id="CHEBI:57540"/>
    </ligand>
</feature>
<feature type="binding site" evidence="1">
    <location>
        <position position="132"/>
    </location>
    <ligand>
        <name>(S)-2,3,4,5-tetrahydrodipicolinate</name>
        <dbReference type="ChEBI" id="CHEBI:16845"/>
    </ligand>
</feature>
<feature type="binding site" evidence="1">
    <location>
        <begin position="141"/>
        <end position="142"/>
    </location>
    <ligand>
        <name>(S)-2,3,4,5-tetrahydrodipicolinate</name>
        <dbReference type="ChEBI" id="CHEBI:16845"/>
    </ligand>
</feature>
<reference key="1">
    <citation type="submission" date="2007-10" db="EMBL/GenBank/DDBJ databases">
        <title>Complete genome of Alkaliphilus oremlandii OhILAs.</title>
        <authorList>
            <person name="Copeland A."/>
            <person name="Lucas S."/>
            <person name="Lapidus A."/>
            <person name="Barry K."/>
            <person name="Detter J.C."/>
            <person name="Glavina del Rio T."/>
            <person name="Hammon N."/>
            <person name="Israni S."/>
            <person name="Dalin E."/>
            <person name="Tice H."/>
            <person name="Pitluck S."/>
            <person name="Chain P."/>
            <person name="Malfatti S."/>
            <person name="Shin M."/>
            <person name="Vergez L."/>
            <person name="Schmutz J."/>
            <person name="Larimer F."/>
            <person name="Land M."/>
            <person name="Hauser L."/>
            <person name="Kyrpides N."/>
            <person name="Mikhailova N."/>
            <person name="Stolz J.F."/>
            <person name="Dawson A."/>
            <person name="Fisher E."/>
            <person name="Crable B."/>
            <person name="Perera E."/>
            <person name="Lisak J."/>
            <person name="Ranganathan M."/>
            <person name="Basu P."/>
            <person name="Richardson P."/>
        </authorList>
    </citation>
    <scope>NUCLEOTIDE SEQUENCE [LARGE SCALE GENOMIC DNA]</scope>
    <source>
        <strain>OhILAs</strain>
    </source>
</reference>
<accession>A8MF41</accession>
<sequence>MDLLIYGVNGHMGSLIKNLAEKDSYWRVIGGVDSEMSDDPMNNRYDVVVDFSHPSALQDVLQLCKEKKIPLVIGTTGFSKEQLEDIKFASAKIPILQSTNMSLGMNLLFRLVEQTAAVLKDKSDIEVIESHHNRKKDAPSGSARTIVESIEKGLGEEKKHQHGRVGECPREKGEIGIHAIRGGNIVGYHEANFINDLETIKIVHEAHNRSVFAQGALDAAKFIMDQEPGLYTMKDLLNLMV</sequence>
<keyword id="KW-0028">Amino-acid biosynthesis</keyword>
<keyword id="KW-0963">Cytoplasm</keyword>
<keyword id="KW-0220">Diaminopimelate biosynthesis</keyword>
<keyword id="KW-0457">Lysine biosynthesis</keyword>
<keyword id="KW-0520">NAD</keyword>
<keyword id="KW-0521">NADP</keyword>
<keyword id="KW-0560">Oxidoreductase</keyword>
<keyword id="KW-1185">Reference proteome</keyword>